<comment type="function">
    <text evidence="1">Catalyzes the conversion of 2-hydroxypentadienoic acid (enolic form of 2-oxopent-4-enoate) to 4-hydroxy-2-ketopentanoic acid.</text>
</comment>
<comment type="catalytic activity">
    <reaction evidence="1">
        <text>(S)-4-hydroxy-2-oxopentanoate = (2Z)-2-hydroxypenta-2,4-dienoate + H2O</text>
        <dbReference type="Rhea" id="RHEA:22580"/>
        <dbReference type="ChEBI" id="CHEBI:15377"/>
        <dbReference type="ChEBI" id="CHEBI:67152"/>
        <dbReference type="ChEBI" id="CHEBI:73143"/>
        <dbReference type="EC" id="4.2.1.80"/>
    </reaction>
</comment>
<comment type="cofactor">
    <cofactor evidence="1">
        <name>a divalent metal cation</name>
        <dbReference type="ChEBI" id="CHEBI:60240"/>
    </cofactor>
</comment>
<comment type="pathway">
    <text evidence="1">Aromatic compound metabolism; 3-phenylpropanoate degradation.</text>
</comment>
<comment type="similarity">
    <text evidence="1">Belongs to the hydratase/decarboxylase family. MhpD subfamily.</text>
</comment>
<name>MHPD1_DECAR</name>
<keyword id="KW-0058">Aromatic hydrocarbons catabolism</keyword>
<keyword id="KW-0456">Lyase</keyword>
<protein>
    <recommendedName>
        <fullName evidence="1">2-keto-4-pentenoate hydratase 1</fullName>
        <ecNumber evidence="1">4.2.1.80</ecNumber>
    </recommendedName>
    <alternativeName>
        <fullName evidence="1">2-hydroxypentadienoic acid hydratase 1</fullName>
    </alternativeName>
</protein>
<evidence type="ECO:0000255" key="1">
    <source>
        <dbReference type="HAMAP-Rule" id="MF_01655"/>
    </source>
</evidence>
<feature type="chain" id="PRO_0000337791" description="2-keto-4-pentenoate hydratase 1">
    <location>
        <begin position="1"/>
        <end position="263"/>
    </location>
</feature>
<reference key="1">
    <citation type="journal article" date="2009" name="BMC Genomics">
        <title>Metabolic analysis of the soil microbe Dechloromonas aromatica str. RCB: indications of a surprisingly complex life-style and cryptic anaerobic pathways for aromatic degradation.</title>
        <authorList>
            <person name="Salinero K.K."/>
            <person name="Keller K."/>
            <person name="Feil W.S."/>
            <person name="Feil H."/>
            <person name="Trong S."/>
            <person name="Di Bartolo G."/>
            <person name="Lapidus A."/>
        </authorList>
    </citation>
    <scope>NUCLEOTIDE SEQUENCE [LARGE SCALE GENOMIC DNA]</scope>
    <source>
        <strain>RCB</strain>
    </source>
</reference>
<proteinExistence type="inferred from homology"/>
<gene>
    <name evidence="1" type="primary">mhpD1</name>
    <name type="ordered locus">Daro_0905</name>
</gene>
<accession>Q47HM0</accession>
<dbReference type="EC" id="4.2.1.80" evidence="1"/>
<dbReference type="EMBL" id="CP000089">
    <property type="protein sequence ID" value="AAZ45661.1"/>
    <property type="molecule type" value="Genomic_DNA"/>
</dbReference>
<dbReference type="SMR" id="Q47HM0"/>
<dbReference type="STRING" id="159087.Daro_0905"/>
<dbReference type="KEGG" id="dar:Daro_0905"/>
<dbReference type="eggNOG" id="COG3971">
    <property type="taxonomic scope" value="Bacteria"/>
</dbReference>
<dbReference type="HOGENOM" id="CLU_060136_4_1_4"/>
<dbReference type="OrthoDB" id="9792137at2"/>
<dbReference type="UniPathway" id="UPA00714"/>
<dbReference type="GO" id="GO:0005737">
    <property type="term" value="C:cytoplasm"/>
    <property type="evidence" value="ECO:0007669"/>
    <property type="project" value="TreeGrafter"/>
</dbReference>
<dbReference type="GO" id="GO:0008684">
    <property type="term" value="F:2-oxopent-4-enoate hydratase activity"/>
    <property type="evidence" value="ECO:0007669"/>
    <property type="project" value="UniProtKB-UniRule"/>
</dbReference>
<dbReference type="GO" id="GO:0030145">
    <property type="term" value="F:manganese ion binding"/>
    <property type="evidence" value="ECO:0007669"/>
    <property type="project" value="InterPro"/>
</dbReference>
<dbReference type="GO" id="GO:0019380">
    <property type="term" value="P:3-phenylpropionate catabolic process"/>
    <property type="evidence" value="ECO:0007669"/>
    <property type="project" value="UniProtKB-UniRule"/>
</dbReference>
<dbReference type="Gene3D" id="3.90.850.10">
    <property type="entry name" value="Fumarylacetoacetase-like, C-terminal domain"/>
    <property type="match status" value="1"/>
</dbReference>
<dbReference type="HAMAP" id="MF_01655">
    <property type="entry name" value="MhpD"/>
    <property type="match status" value="1"/>
</dbReference>
<dbReference type="InterPro" id="IPR011234">
    <property type="entry name" value="Fumarylacetoacetase-like_C"/>
</dbReference>
<dbReference type="InterPro" id="IPR036663">
    <property type="entry name" value="Fumarylacetoacetase_C_sf"/>
</dbReference>
<dbReference type="InterPro" id="IPR050772">
    <property type="entry name" value="Hydratase-Decarb/MhpD_sf"/>
</dbReference>
<dbReference type="InterPro" id="IPR023793">
    <property type="entry name" value="Keto_pentenoate-hydratase"/>
</dbReference>
<dbReference type="NCBIfam" id="NF008461">
    <property type="entry name" value="PRK11342.1"/>
    <property type="match status" value="1"/>
</dbReference>
<dbReference type="PANTHER" id="PTHR30143:SF0">
    <property type="entry name" value="2-KETO-4-PENTENOATE HYDRATASE"/>
    <property type="match status" value="1"/>
</dbReference>
<dbReference type="PANTHER" id="PTHR30143">
    <property type="entry name" value="ACID HYDRATASE"/>
    <property type="match status" value="1"/>
</dbReference>
<dbReference type="Pfam" id="PF01557">
    <property type="entry name" value="FAA_hydrolase"/>
    <property type="match status" value="1"/>
</dbReference>
<dbReference type="SUPFAM" id="SSF56529">
    <property type="entry name" value="FAH"/>
    <property type="match status" value="1"/>
</dbReference>
<organism>
    <name type="scientific">Dechloromonas aromatica (strain RCB)</name>
    <dbReference type="NCBI Taxonomy" id="159087"/>
    <lineage>
        <taxon>Bacteria</taxon>
        <taxon>Pseudomonadati</taxon>
        <taxon>Pseudomonadota</taxon>
        <taxon>Betaproteobacteria</taxon>
        <taxon>Rhodocyclales</taxon>
        <taxon>Azonexaceae</taxon>
        <taxon>Dechloromonas</taxon>
    </lineage>
</organism>
<sequence>MSNASLLSTEAAAALLKAATADGRSIAPLRDRLAIADQDSAYAVQEINTRAWLAEGRRLVGRKIGLTSLAVQAQLGVDQPDFGMLFADMAVGDGEIVAAGRLIQPKVEAEVALILGRDLTQERHTYADLIRATEYAVPSIEIVDSRIENWNIKFVDTVADNASSGLFVLGGRPVRLSDIDLTACAMEMKRGDEIVSRGNGRACLGSPLNAAIWLADMMVRCGRPLQAGDIVLTGALGPMVAVKSGDRFDVSIDGLGNVSALFA</sequence>